<protein>
    <recommendedName>
        <fullName>Uncharacterized protein YjfN</fullName>
    </recommendedName>
</protein>
<evidence type="ECO:0000255" key="1"/>
<evidence type="ECO:0000305" key="2"/>
<dbReference type="EMBL" id="AE014075">
    <property type="protein sequence ID" value="AAN83697.1"/>
    <property type="status" value="ALT_INIT"/>
    <property type="molecule type" value="Genomic_DNA"/>
</dbReference>
<dbReference type="RefSeq" id="WP_000811566.1">
    <property type="nucleotide sequence ID" value="NZ_CP051263.1"/>
</dbReference>
<dbReference type="SMR" id="P0AF83"/>
<dbReference type="STRING" id="199310.c5276"/>
<dbReference type="GeneID" id="93777636"/>
<dbReference type="KEGG" id="ecc:c5276"/>
<dbReference type="eggNOG" id="ENOG5032S43">
    <property type="taxonomic scope" value="Bacteria"/>
</dbReference>
<dbReference type="HOGENOM" id="CLU_158602_3_0_6"/>
<dbReference type="Proteomes" id="UP000001410">
    <property type="component" value="Chromosome"/>
</dbReference>
<dbReference type="GO" id="GO:0042597">
    <property type="term" value="C:periplasmic space"/>
    <property type="evidence" value="ECO:0007669"/>
    <property type="project" value="UniProtKB-SubCell"/>
</dbReference>
<dbReference type="Gene3D" id="3.30.1660.10">
    <property type="entry name" value="Flavin-binding protein dodecin"/>
    <property type="match status" value="1"/>
</dbReference>
<dbReference type="InterPro" id="IPR051096">
    <property type="entry name" value="BhsA/McbA_stress_biofilm_assoc"/>
</dbReference>
<dbReference type="InterPro" id="IPR025543">
    <property type="entry name" value="Dodecin-like"/>
</dbReference>
<dbReference type="InterPro" id="IPR036275">
    <property type="entry name" value="YdgH-like_sf"/>
</dbReference>
<dbReference type="InterPro" id="IPR010854">
    <property type="entry name" value="YdgH/BhsA/McbA-like_dom"/>
</dbReference>
<dbReference type="PANTHER" id="PTHR34156:SF4">
    <property type="entry name" value="INNER MEMBRANE PROTEIN"/>
    <property type="match status" value="1"/>
</dbReference>
<dbReference type="PANTHER" id="PTHR34156">
    <property type="entry name" value="OUTER MEMBRANE PROTEIN-RELATED-RELATED"/>
    <property type="match status" value="1"/>
</dbReference>
<dbReference type="Pfam" id="PF07338">
    <property type="entry name" value="YdgH_BhsA-like"/>
    <property type="match status" value="1"/>
</dbReference>
<dbReference type="SUPFAM" id="SSF159871">
    <property type="entry name" value="YdgH-like"/>
    <property type="match status" value="1"/>
</dbReference>
<keyword id="KW-0574">Periplasm</keyword>
<keyword id="KW-1185">Reference proteome</keyword>
<keyword id="KW-0732">Signal</keyword>
<sequence length="91" mass="9949">MKQLLASPSLQLVTYPASATAQSAEFASADCVTGLNEIGQISVSNISGDPQDVERIVALKADEQGASWYRIITMYEDQQPDNWRVQAILYA</sequence>
<accession>P0AF83</accession>
<accession>P39296</accession>
<comment type="subcellular location">
    <subcellularLocation>
        <location evidence="2">Periplasm</location>
    </subcellularLocation>
</comment>
<comment type="similarity">
    <text evidence="2">Belongs to the BhsA/McbA family.</text>
</comment>
<comment type="sequence caution" evidence="2">
    <conflict type="erroneous initiation">
        <sequence resource="EMBL-CDS" id="AAN83697"/>
    </conflict>
</comment>
<reference key="1">
    <citation type="journal article" date="2002" name="Proc. Natl. Acad. Sci. U.S.A.">
        <title>Extensive mosaic structure revealed by the complete genome sequence of uropathogenic Escherichia coli.</title>
        <authorList>
            <person name="Welch R.A."/>
            <person name="Burland V."/>
            <person name="Plunkett G. III"/>
            <person name="Redford P."/>
            <person name="Roesch P."/>
            <person name="Rasko D."/>
            <person name="Buckles E.L."/>
            <person name="Liou S.-R."/>
            <person name="Boutin A."/>
            <person name="Hackett J."/>
            <person name="Stroud D."/>
            <person name="Mayhew G.F."/>
            <person name="Rose D.J."/>
            <person name="Zhou S."/>
            <person name="Schwartz D.C."/>
            <person name="Perna N.T."/>
            <person name="Mobley H.L.T."/>
            <person name="Donnenberg M.S."/>
            <person name="Blattner F.R."/>
        </authorList>
    </citation>
    <scope>NUCLEOTIDE SEQUENCE [LARGE SCALE GENOMIC DNA]</scope>
    <source>
        <strain>CFT073 / ATCC 700928 / UPEC</strain>
    </source>
</reference>
<proteinExistence type="inferred from homology"/>
<name>YJFN_ECOL6</name>
<organism>
    <name type="scientific">Escherichia coli O6:H1 (strain CFT073 / ATCC 700928 / UPEC)</name>
    <dbReference type="NCBI Taxonomy" id="199310"/>
    <lineage>
        <taxon>Bacteria</taxon>
        <taxon>Pseudomonadati</taxon>
        <taxon>Pseudomonadota</taxon>
        <taxon>Gammaproteobacteria</taxon>
        <taxon>Enterobacterales</taxon>
        <taxon>Enterobacteriaceae</taxon>
        <taxon>Escherichia</taxon>
    </lineage>
</organism>
<feature type="signal peptide" evidence="1">
    <location>
        <begin position="1"/>
        <end position="21"/>
    </location>
</feature>
<feature type="chain" id="PRO_0000169755" description="Uncharacterized protein YjfN">
    <location>
        <begin position="22"/>
        <end position="91"/>
    </location>
</feature>
<gene>
    <name type="primary">yjfN</name>
    <name type="ordered locus">c5276</name>
</gene>